<name>LPXK_COXB1</name>
<keyword id="KW-0067">ATP-binding</keyword>
<keyword id="KW-0418">Kinase</keyword>
<keyword id="KW-0441">Lipid A biosynthesis</keyword>
<keyword id="KW-0444">Lipid biosynthesis</keyword>
<keyword id="KW-0443">Lipid metabolism</keyword>
<keyword id="KW-0547">Nucleotide-binding</keyword>
<keyword id="KW-0808">Transferase</keyword>
<reference key="1">
    <citation type="journal article" date="2009" name="Infect. Immun.">
        <title>Comparative genomics reveal extensive transposon-mediated genomic plasticity and diversity among potential effector proteins within the genus Coxiella.</title>
        <authorList>
            <person name="Beare P.A."/>
            <person name="Unsworth N."/>
            <person name="Andoh M."/>
            <person name="Voth D.E."/>
            <person name="Omsland A."/>
            <person name="Gilk S.D."/>
            <person name="Williams K.P."/>
            <person name="Sobral B.W."/>
            <person name="Kupko J.J. III"/>
            <person name="Porcella S.F."/>
            <person name="Samuel J.E."/>
            <person name="Heinzen R.A."/>
        </authorList>
    </citation>
    <scope>NUCLEOTIDE SEQUENCE [LARGE SCALE GENOMIC DNA]</scope>
    <source>
        <strain>CbuK_Q154</strain>
    </source>
</reference>
<gene>
    <name evidence="1" type="primary">lpxK</name>
    <name type="ordered locus">CbuK_0725</name>
</gene>
<feature type="chain" id="PRO_1000191530" description="Tetraacyldisaccharide 4'-kinase">
    <location>
        <begin position="1"/>
        <end position="325"/>
    </location>
</feature>
<feature type="binding site" evidence="1">
    <location>
        <begin position="58"/>
        <end position="65"/>
    </location>
    <ligand>
        <name>ATP</name>
        <dbReference type="ChEBI" id="CHEBI:30616"/>
    </ligand>
</feature>
<comment type="function">
    <text evidence="1">Transfers the gamma-phosphate of ATP to the 4'-position of a tetraacyldisaccharide 1-phosphate intermediate (termed DS-1-P) to form tetraacyldisaccharide 1,4'-bis-phosphate (lipid IVA).</text>
</comment>
<comment type="catalytic activity">
    <reaction evidence="1">
        <text>a lipid A disaccharide + ATP = a lipid IVA + ADP + H(+)</text>
        <dbReference type="Rhea" id="RHEA:67840"/>
        <dbReference type="ChEBI" id="CHEBI:15378"/>
        <dbReference type="ChEBI" id="CHEBI:30616"/>
        <dbReference type="ChEBI" id="CHEBI:176343"/>
        <dbReference type="ChEBI" id="CHEBI:176425"/>
        <dbReference type="ChEBI" id="CHEBI:456216"/>
        <dbReference type="EC" id="2.7.1.130"/>
    </reaction>
</comment>
<comment type="pathway">
    <text evidence="1">Glycolipid biosynthesis; lipid IV(A) biosynthesis; lipid IV(A) from (3R)-3-hydroxytetradecanoyl-[acyl-carrier-protein] and UDP-N-acetyl-alpha-D-glucosamine: step 6/6.</text>
</comment>
<comment type="similarity">
    <text evidence="1">Belongs to the LpxK family.</text>
</comment>
<protein>
    <recommendedName>
        <fullName evidence="1">Tetraacyldisaccharide 4'-kinase</fullName>
        <ecNumber evidence="1">2.7.1.130</ecNumber>
    </recommendedName>
    <alternativeName>
        <fullName evidence="1">Lipid A 4'-kinase</fullName>
    </alternativeName>
</protein>
<sequence length="325" mass="36889">MLKAPRFWYQPRSLLGGILSPFSFLYQIIVRIRRGLYAVGLKKISKFPVPIVIVGNITVGGSGKTPFVIWLANELKNRGFRPGVVSRGYGGKANRFLQTVTENSDPLQVGDEAVLLMKKIDCPMVVCRDRGAAVKHLLRNFQCDVVIGDDGLQHYSLGRDLEIALLDDRHLGNGRCLPAGPLREPKSRLNTVDFVVPKQLRPNEIYQLKNPAKKIDFNELKELTVHAVAGIGNPGYFFKQLETLGANVIAHPFRDHYFYRSEDFNFDDDHLIILTEKDAIKCKQFDDERLFCFSVDAVVPDQFQNDFFRLISNIILRKQAQREGI</sequence>
<dbReference type="EC" id="2.7.1.130" evidence="1"/>
<dbReference type="EMBL" id="CP001020">
    <property type="protein sequence ID" value="ACJ19980.1"/>
    <property type="molecule type" value="Genomic_DNA"/>
</dbReference>
<dbReference type="RefSeq" id="WP_005768833.1">
    <property type="nucleotide sequence ID" value="NC_011528.1"/>
</dbReference>
<dbReference type="SMR" id="B6J6T1"/>
<dbReference type="KEGG" id="cbc:CbuK_0725"/>
<dbReference type="HOGENOM" id="CLU_038816_2_0_6"/>
<dbReference type="UniPathway" id="UPA00359">
    <property type="reaction ID" value="UER00482"/>
</dbReference>
<dbReference type="GO" id="GO:0005886">
    <property type="term" value="C:plasma membrane"/>
    <property type="evidence" value="ECO:0007669"/>
    <property type="project" value="TreeGrafter"/>
</dbReference>
<dbReference type="GO" id="GO:0005524">
    <property type="term" value="F:ATP binding"/>
    <property type="evidence" value="ECO:0007669"/>
    <property type="project" value="UniProtKB-UniRule"/>
</dbReference>
<dbReference type="GO" id="GO:0009029">
    <property type="term" value="F:tetraacyldisaccharide 4'-kinase activity"/>
    <property type="evidence" value="ECO:0007669"/>
    <property type="project" value="UniProtKB-UniRule"/>
</dbReference>
<dbReference type="GO" id="GO:0009245">
    <property type="term" value="P:lipid A biosynthetic process"/>
    <property type="evidence" value="ECO:0007669"/>
    <property type="project" value="UniProtKB-UniRule"/>
</dbReference>
<dbReference type="GO" id="GO:0009244">
    <property type="term" value="P:lipopolysaccharide core region biosynthetic process"/>
    <property type="evidence" value="ECO:0007669"/>
    <property type="project" value="TreeGrafter"/>
</dbReference>
<dbReference type="CDD" id="cd01983">
    <property type="entry name" value="SIMIBI"/>
    <property type="match status" value="1"/>
</dbReference>
<dbReference type="HAMAP" id="MF_00409">
    <property type="entry name" value="LpxK"/>
    <property type="match status" value="1"/>
</dbReference>
<dbReference type="InterPro" id="IPR003758">
    <property type="entry name" value="LpxK"/>
</dbReference>
<dbReference type="InterPro" id="IPR027417">
    <property type="entry name" value="P-loop_NTPase"/>
</dbReference>
<dbReference type="NCBIfam" id="TIGR00682">
    <property type="entry name" value="lpxK"/>
    <property type="match status" value="1"/>
</dbReference>
<dbReference type="PANTHER" id="PTHR42724">
    <property type="entry name" value="TETRAACYLDISACCHARIDE 4'-KINASE"/>
    <property type="match status" value="1"/>
</dbReference>
<dbReference type="PANTHER" id="PTHR42724:SF1">
    <property type="entry name" value="TETRAACYLDISACCHARIDE 4'-KINASE, MITOCHONDRIAL-RELATED"/>
    <property type="match status" value="1"/>
</dbReference>
<dbReference type="Pfam" id="PF02606">
    <property type="entry name" value="LpxK"/>
    <property type="match status" value="1"/>
</dbReference>
<dbReference type="SUPFAM" id="SSF52540">
    <property type="entry name" value="P-loop containing nucleoside triphosphate hydrolases"/>
    <property type="match status" value="1"/>
</dbReference>
<organism>
    <name type="scientific">Coxiella burnetii (strain CbuK_Q154)</name>
    <name type="common">Coxiella burnetii (strain Q154)</name>
    <dbReference type="NCBI Taxonomy" id="434924"/>
    <lineage>
        <taxon>Bacteria</taxon>
        <taxon>Pseudomonadati</taxon>
        <taxon>Pseudomonadota</taxon>
        <taxon>Gammaproteobacteria</taxon>
        <taxon>Legionellales</taxon>
        <taxon>Coxiellaceae</taxon>
        <taxon>Coxiella</taxon>
    </lineage>
</organism>
<evidence type="ECO:0000255" key="1">
    <source>
        <dbReference type="HAMAP-Rule" id="MF_00409"/>
    </source>
</evidence>
<accession>B6J6T1</accession>
<proteinExistence type="inferred from homology"/>